<reference key="1">
    <citation type="submission" date="1995-08" db="EMBL/GenBank/DDBJ databases">
        <authorList>
            <person name="Ramarao C.S."/>
            <person name="Primakoff P."/>
        </authorList>
    </citation>
    <scope>NUCLEOTIDE SEQUENCE</scope>
    <source>
        <tissue>Sperm</tissue>
    </source>
</reference>
<reference key="2">
    <citation type="journal article" date="2002" name="J. Biol. Chem.">
        <title>Mouse sperm lacking cell surface hyaluronidase PH-20 can pass through the layer of cumulus cells and fertilize the egg.</title>
        <authorList>
            <person name="Baba D."/>
            <person name="Kashiwabara S."/>
            <person name="Honda A."/>
            <person name="Yamagata K."/>
            <person name="Wu Q."/>
            <person name="Ikawa M."/>
            <person name="Okabe M."/>
            <person name="Baba T."/>
        </authorList>
    </citation>
    <scope>NUCLEOTIDE SEQUENCE [GENOMIC DNA]</scope>
    <source>
        <strain>129/SvJ</strain>
        <tissue>Testis</tissue>
    </source>
</reference>
<reference key="3">
    <citation type="submission" date="2003-02" db="EMBL/GenBank/DDBJ databases">
        <title>Assessment of contraceptive vaccines based on mouse sperm protein PH-20 (SPAM-1).</title>
        <authorList>
            <person name="Hardy C.M."/>
            <person name="Mobbs K.J."/>
        </authorList>
    </citation>
    <scope>NUCLEOTIDE SEQUENCE</scope>
    <source>
        <strain>BALB/cJ</strain>
        <tissue>Testis</tissue>
    </source>
</reference>
<reference key="4">
    <citation type="journal article" date="2005" name="Science">
        <title>The transcriptional landscape of the mammalian genome.</title>
        <authorList>
            <person name="Carninci P."/>
            <person name="Kasukawa T."/>
            <person name="Katayama S."/>
            <person name="Gough J."/>
            <person name="Frith M.C."/>
            <person name="Maeda N."/>
            <person name="Oyama R."/>
            <person name="Ravasi T."/>
            <person name="Lenhard B."/>
            <person name="Wells C."/>
            <person name="Kodzius R."/>
            <person name="Shimokawa K."/>
            <person name="Bajic V.B."/>
            <person name="Brenner S.E."/>
            <person name="Batalov S."/>
            <person name="Forrest A.R."/>
            <person name="Zavolan M."/>
            <person name="Davis M.J."/>
            <person name="Wilming L.G."/>
            <person name="Aidinis V."/>
            <person name="Allen J.E."/>
            <person name="Ambesi-Impiombato A."/>
            <person name="Apweiler R."/>
            <person name="Aturaliya R.N."/>
            <person name="Bailey T.L."/>
            <person name="Bansal M."/>
            <person name="Baxter L."/>
            <person name="Beisel K.W."/>
            <person name="Bersano T."/>
            <person name="Bono H."/>
            <person name="Chalk A.M."/>
            <person name="Chiu K.P."/>
            <person name="Choudhary V."/>
            <person name="Christoffels A."/>
            <person name="Clutterbuck D.R."/>
            <person name="Crowe M.L."/>
            <person name="Dalla E."/>
            <person name="Dalrymple B.P."/>
            <person name="de Bono B."/>
            <person name="Della Gatta G."/>
            <person name="di Bernardo D."/>
            <person name="Down T."/>
            <person name="Engstrom P."/>
            <person name="Fagiolini M."/>
            <person name="Faulkner G."/>
            <person name="Fletcher C.F."/>
            <person name="Fukushima T."/>
            <person name="Furuno M."/>
            <person name="Futaki S."/>
            <person name="Gariboldi M."/>
            <person name="Georgii-Hemming P."/>
            <person name="Gingeras T.R."/>
            <person name="Gojobori T."/>
            <person name="Green R.E."/>
            <person name="Gustincich S."/>
            <person name="Harbers M."/>
            <person name="Hayashi Y."/>
            <person name="Hensch T.K."/>
            <person name="Hirokawa N."/>
            <person name="Hill D."/>
            <person name="Huminiecki L."/>
            <person name="Iacono M."/>
            <person name="Ikeo K."/>
            <person name="Iwama A."/>
            <person name="Ishikawa T."/>
            <person name="Jakt M."/>
            <person name="Kanapin A."/>
            <person name="Katoh M."/>
            <person name="Kawasawa Y."/>
            <person name="Kelso J."/>
            <person name="Kitamura H."/>
            <person name="Kitano H."/>
            <person name="Kollias G."/>
            <person name="Krishnan S.P."/>
            <person name="Kruger A."/>
            <person name="Kummerfeld S.K."/>
            <person name="Kurochkin I.V."/>
            <person name="Lareau L.F."/>
            <person name="Lazarevic D."/>
            <person name="Lipovich L."/>
            <person name="Liu J."/>
            <person name="Liuni S."/>
            <person name="McWilliam S."/>
            <person name="Madan Babu M."/>
            <person name="Madera M."/>
            <person name="Marchionni L."/>
            <person name="Matsuda H."/>
            <person name="Matsuzawa S."/>
            <person name="Miki H."/>
            <person name="Mignone F."/>
            <person name="Miyake S."/>
            <person name="Morris K."/>
            <person name="Mottagui-Tabar S."/>
            <person name="Mulder N."/>
            <person name="Nakano N."/>
            <person name="Nakauchi H."/>
            <person name="Ng P."/>
            <person name="Nilsson R."/>
            <person name="Nishiguchi S."/>
            <person name="Nishikawa S."/>
            <person name="Nori F."/>
            <person name="Ohara O."/>
            <person name="Okazaki Y."/>
            <person name="Orlando V."/>
            <person name="Pang K.C."/>
            <person name="Pavan W.J."/>
            <person name="Pavesi G."/>
            <person name="Pesole G."/>
            <person name="Petrovsky N."/>
            <person name="Piazza S."/>
            <person name="Reed J."/>
            <person name="Reid J.F."/>
            <person name="Ring B.Z."/>
            <person name="Ringwald M."/>
            <person name="Rost B."/>
            <person name="Ruan Y."/>
            <person name="Salzberg S.L."/>
            <person name="Sandelin A."/>
            <person name="Schneider C."/>
            <person name="Schoenbach C."/>
            <person name="Sekiguchi K."/>
            <person name="Semple C.A."/>
            <person name="Seno S."/>
            <person name="Sessa L."/>
            <person name="Sheng Y."/>
            <person name="Shibata Y."/>
            <person name="Shimada H."/>
            <person name="Shimada K."/>
            <person name="Silva D."/>
            <person name="Sinclair B."/>
            <person name="Sperling S."/>
            <person name="Stupka E."/>
            <person name="Sugiura K."/>
            <person name="Sultana R."/>
            <person name="Takenaka Y."/>
            <person name="Taki K."/>
            <person name="Tammoja K."/>
            <person name="Tan S.L."/>
            <person name="Tang S."/>
            <person name="Taylor M.S."/>
            <person name="Tegner J."/>
            <person name="Teichmann S.A."/>
            <person name="Ueda H.R."/>
            <person name="van Nimwegen E."/>
            <person name="Verardo R."/>
            <person name="Wei C.L."/>
            <person name="Yagi K."/>
            <person name="Yamanishi H."/>
            <person name="Zabarovsky E."/>
            <person name="Zhu S."/>
            <person name="Zimmer A."/>
            <person name="Hide W."/>
            <person name="Bult C."/>
            <person name="Grimmond S.M."/>
            <person name="Teasdale R.D."/>
            <person name="Liu E.T."/>
            <person name="Brusic V."/>
            <person name="Quackenbush J."/>
            <person name="Wahlestedt C."/>
            <person name="Mattick J.S."/>
            <person name="Hume D.A."/>
            <person name="Kai C."/>
            <person name="Sasaki D."/>
            <person name="Tomaru Y."/>
            <person name="Fukuda S."/>
            <person name="Kanamori-Katayama M."/>
            <person name="Suzuki M."/>
            <person name="Aoki J."/>
            <person name="Arakawa T."/>
            <person name="Iida J."/>
            <person name="Imamura K."/>
            <person name="Itoh M."/>
            <person name="Kato T."/>
            <person name="Kawaji H."/>
            <person name="Kawagashira N."/>
            <person name="Kawashima T."/>
            <person name="Kojima M."/>
            <person name="Kondo S."/>
            <person name="Konno H."/>
            <person name="Nakano K."/>
            <person name="Ninomiya N."/>
            <person name="Nishio T."/>
            <person name="Okada M."/>
            <person name="Plessy C."/>
            <person name="Shibata K."/>
            <person name="Shiraki T."/>
            <person name="Suzuki S."/>
            <person name="Tagami M."/>
            <person name="Waki K."/>
            <person name="Watahiki A."/>
            <person name="Okamura-Oho Y."/>
            <person name="Suzuki H."/>
            <person name="Kawai J."/>
            <person name="Hayashizaki Y."/>
        </authorList>
    </citation>
    <scope>NUCLEOTIDE SEQUENCE [LARGE SCALE MRNA]</scope>
    <source>
        <strain>C57BL/6J</strain>
        <tissue>Testis</tissue>
    </source>
</reference>
<reference key="5">
    <citation type="journal article" date="1995" name="Biochemistry">
        <title>Biochemical characterization of a glycosylphosphatidylinositol-linked hyaluronidase on mouse sperm.</title>
        <authorList>
            <person name="Thaler C.D."/>
            <person name="Cardullo R.A."/>
        </authorList>
    </citation>
    <scope>CHARACTERIZATION</scope>
</reference>
<reference key="6">
    <citation type="journal article" date="2010" name="Cell">
        <title>A tissue-specific atlas of mouse protein phosphorylation and expression.</title>
        <authorList>
            <person name="Huttlin E.L."/>
            <person name="Jedrychowski M.P."/>
            <person name="Elias J.E."/>
            <person name="Goswami T."/>
            <person name="Rad R."/>
            <person name="Beausoleil S.A."/>
            <person name="Villen J."/>
            <person name="Haas W."/>
            <person name="Sowa M.E."/>
            <person name="Gygi S.P."/>
        </authorList>
    </citation>
    <scope>IDENTIFICATION BY MASS SPECTROMETRY [LARGE SCALE ANALYSIS]</scope>
    <source>
        <tissue>Testis</tissue>
    </source>
</reference>
<gene>
    <name type="primary">Spam1</name>
    <name type="synonym">Ph20</name>
    <name type="synonym">Spam</name>
</gene>
<accession>P48794</accession>
<accession>Q7TSD6</accession>
<accession>Q812F4</accession>
<accession>Q9DAQ1</accession>
<keyword id="KW-0130">Cell adhesion</keyword>
<keyword id="KW-1003">Cell membrane</keyword>
<keyword id="KW-1015">Disulfide bond</keyword>
<keyword id="KW-0325">Glycoprotein</keyword>
<keyword id="KW-0326">Glycosidase</keyword>
<keyword id="KW-0336">GPI-anchor</keyword>
<keyword id="KW-0378">Hydrolase</keyword>
<keyword id="KW-0449">Lipoprotein</keyword>
<keyword id="KW-0472">Membrane</keyword>
<keyword id="KW-1185">Reference proteome</keyword>
<keyword id="KW-0732">Signal</keyword>
<organism>
    <name type="scientific">Mus musculus</name>
    <name type="common">Mouse</name>
    <dbReference type="NCBI Taxonomy" id="10090"/>
    <lineage>
        <taxon>Eukaryota</taxon>
        <taxon>Metazoa</taxon>
        <taxon>Chordata</taxon>
        <taxon>Craniata</taxon>
        <taxon>Vertebrata</taxon>
        <taxon>Euteleostomi</taxon>
        <taxon>Mammalia</taxon>
        <taxon>Eutheria</taxon>
        <taxon>Euarchontoglires</taxon>
        <taxon>Glires</taxon>
        <taxon>Rodentia</taxon>
        <taxon>Myomorpha</taxon>
        <taxon>Muroidea</taxon>
        <taxon>Muridae</taxon>
        <taxon>Murinae</taxon>
        <taxon>Mus</taxon>
        <taxon>Mus</taxon>
    </lineage>
</organism>
<dbReference type="EC" id="3.2.1.35"/>
<dbReference type="EMBL" id="U33958">
    <property type="protein sequence ID" value="AAA76603.1"/>
    <property type="molecule type" value="mRNA"/>
</dbReference>
<dbReference type="EMBL" id="AB085677">
    <property type="protein sequence ID" value="BAC55070.1"/>
    <property type="molecule type" value="Genomic_DNA"/>
</dbReference>
<dbReference type="EMBL" id="AY228460">
    <property type="protein sequence ID" value="AAP49832.1"/>
    <property type="molecule type" value="mRNA"/>
</dbReference>
<dbReference type="EMBL" id="AK005638">
    <property type="protein sequence ID" value="BAB24161.1"/>
    <property type="molecule type" value="mRNA"/>
</dbReference>
<dbReference type="CCDS" id="CCDS19947.1"/>
<dbReference type="RefSeq" id="NP_001073344.1">
    <property type="nucleotide sequence ID" value="NM_001079875.2"/>
</dbReference>
<dbReference type="RefSeq" id="NP_033267.2">
    <property type="nucleotide sequence ID" value="NM_009241.3"/>
</dbReference>
<dbReference type="RefSeq" id="XP_006505088.1">
    <property type="nucleotide sequence ID" value="XM_006505025.3"/>
</dbReference>
<dbReference type="SMR" id="P48794"/>
<dbReference type="BioGRID" id="203421">
    <property type="interactions" value="1"/>
</dbReference>
<dbReference type="FunCoup" id="P48794">
    <property type="interactions" value="147"/>
</dbReference>
<dbReference type="STRING" id="10090.ENSMUSP00000143970"/>
<dbReference type="CAZy" id="GH56">
    <property type="family name" value="Glycoside Hydrolase Family 56"/>
</dbReference>
<dbReference type="GlyCosmos" id="P48794">
    <property type="glycosylation" value="4 sites, No reported glycans"/>
</dbReference>
<dbReference type="GlyGen" id="P48794">
    <property type="glycosylation" value="4 sites"/>
</dbReference>
<dbReference type="PhosphoSitePlus" id="P48794"/>
<dbReference type="SwissPalm" id="P48794"/>
<dbReference type="PaxDb" id="10090-ENSMUSP00000031693"/>
<dbReference type="PeptideAtlas" id="P48794"/>
<dbReference type="ProteomicsDB" id="269512"/>
<dbReference type="DNASU" id="20690"/>
<dbReference type="Ensembl" id="ENSMUST00000031693.3">
    <property type="protein sequence ID" value="ENSMUSP00000031693.3"/>
    <property type="gene ID" value="ENSMUSG00000029682.6"/>
</dbReference>
<dbReference type="Ensembl" id="ENSMUST00000202331.4">
    <property type="protein sequence ID" value="ENSMUSP00000143944.2"/>
    <property type="gene ID" value="ENSMUSG00000029682.6"/>
</dbReference>
<dbReference type="Ensembl" id="ENSMUST00000202569.4">
    <property type="protein sequence ID" value="ENSMUSP00000143970.2"/>
    <property type="gene ID" value="ENSMUSG00000029682.6"/>
</dbReference>
<dbReference type="GeneID" id="20690"/>
<dbReference type="KEGG" id="mmu:20690"/>
<dbReference type="UCSC" id="uc009bby.2">
    <property type="organism name" value="mouse"/>
</dbReference>
<dbReference type="AGR" id="MGI:109335"/>
<dbReference type="CTD" id="6677"/>
<dbReference type="MGI" id="MGI:109335">
    <property type="gene designation" value="Spam1"/>
</dbReference>
<dbReference type="VEuPathDB" id="HostDB:ENSMUSG00000029682"/>
<dbReference type="eggNOG" id="ENOG502R6HD">
    <property type="taxonomic scope" value="Eukaryota"/>
</dbReference>
<dbReference type="GeneTree" id="ENSGT01020000230364"/>
<dbReference type="InParanoid" id="P48794"/>
<dbReference type="OMA" id="SLAAKMC"/>
<dbReference type="OrthoDB" id="5796153at2759"/>
<dbReference type="PhylomeDB" id="P48794"/>
<dbReference type="TreeFam" id="TF321598"/>
<dbReference type="BioGRID-ORCS" id="20690">
    <property type="hits" value="1 hit in 76 CRISPR screens"/>
</dbReference>
<dbReference type="PRO" id="PR:P48794"/>
<dbReference type="Proteomes" id="UP000000589">
    <property type="component" value="Chromosome 6"/>
</dbReference>
<dbReference type="RNAct" id="P48794">
    <property type="molecule type" value="protein"/>
</dbReference>
<dbReference type="Bgee" id="ENSMUSG00000029682">
    <property type="expression patterns" value="Expressed in spermatid and 9 other cell types or tissues"/>
</dbReference>
<dbReference type="GO" id="GO:0001669">
    <property type="term" value="C:acrosomal vesicle"/>
    <property type="evidence" value="ECO:0000314"/>
    <property type="project" value="MGI"/>
</dbReference>
<dbReference type="GO" id="GO:0009897">
    <property type="term" value="C:external side of plasma membrane"/>
    <property type="evidence" value="ECO:0000314"/>
    <property type="project" value="MGI"/>
</dbReference>
<dbReference type="GO" id="GO:0045121">
    <property type="term" value="C:membrane raft"/>
    <property type="evidence" value="ECO:0000314"/>
    <property type="project" value="MGI"/>
</dbReference>
<dbReference type="GO" id="GO:0005886">
    <property type="term" value="C:plasma membrane"/>
    <property type="evidence" value="ECO:0000314"/>
    <property type="project" value="MGI"/>
</dbReference>
<dbReference type="GO" id="GO:0004415">
    <property type="term" value="F:hyalurononglucosaminidase activity"/>
    <property type="evidence" value="ECO:0000314"/>
    <property type="project" value="MGI"/>
</dbReference>
<dbReference type="GO" id="GO:0005975">
    <property type="term" value="P:carbohydrate metabolic process"/>
    <property type="evidence" value="ECO:0007669"/>
    <property type="project" value="InterPro"/>
</dbReference>
<dbReference type="GO" id="GO:0007155">
    <property type="term" value="P:cell adhesion"/>
    <property type="evidence" value="ECO:0007669"/>
    <property type="project" value="UniProtKB-KW"/>
</dbReference>
<dbReference type="GO" id="GO:0007342">
    <property type="term" value="P:fusion of sperm to egg plasma membrane involved in single fertilization"/>
    <property type="evidence" value="ECO:0007669"/>
    <property type="project" value="InterPro"/>
</dbReference>
<dbReference type="GO" id="GO:0007338">
    <property type="term" value="P:single fertilization"/>
    <property type="evidence" value="ECO:0000315"/>
    <property type="project" value="MGI"/>
</dbReference>
<dbReference type="FunFam" id="3.20.20.70:FF:000065">
    <property type="entry name" value="Hyaluronidase"/>
    <property type="match status" value="1"/>
</dbReference>
<dbReference type="Gene3D" id="3.20.20.70">
    <property type="entry name" value="Aldolase class I"/>
    <property type="match status" value="1"/>
</dbReference>
<dbReference type="InterPro" id="IPR013785">
    <property type="entry name" value="Aldolase_TIM"/>
</dbReference>
<dbReference type="InterPro" id="IPR017853">
    <property type="entry name" value="Glycoside_hydrolase_SF"/>
</dbReference>
<dbReference type="InterPro" id="IPR018155">
    <property type="entry name" value="Hyaluronidase"/>
</dbReference>
<dbReference type="InterPro" id="IPR001439">
    <property type="entry name" value="Hyaluronidase_PH20/Hyal5"/>
</dbReference>
<dbReference type="PANTHER" id="PTHR11769">
    <property type="entry name" value="HYALURONIDASE"/>
    <property type="match status" value="1"/>
</dbReference>
<dbReference type="PANTHER" id="PTHR11769:SF17">
    <property type="entry name" value="HYALURONIDASE PH-20"/>
    <property type="match status" value="1"/>
</dbReference>
<dbReference type="Pfam" id="PF01630">
    <property type="entry name" value="Glyco_hydro_56"/>
    <property type="match status" value="1"/>
</dbReference>
<dbReference type="PIRSF" id="PIRSF038193">
    <property type="entry name" value="Hyaluronidase"/>
    <property type="match status" value="1"/>
</dbReference>
<dbReference type="PIRSF" id="PIRSF500773">
    <property type="entry name" value="Hyaluronidase_PH20_Hyal5"/>
    <property type="match status" value="1"/>
</dbReference>
<dbReference type="PRINTS" id="PR00846">
    <property type="entry name" value="GLHYDRLASE56"/>
</dbReference>
<dbReference type="PRINTS" id="PR00848">
    <property type="entry name" value="SPERMPH20"/>
</dbReference>
<dbReference type="SUPFAM" id="SSF51445">
    <property type="entry name" value="(Trans)glycosidases"/>
    <property type="match status" value="1"/>
</dbReference>
<proteinExistence type="evidence at protein level"/>
<name>HYALP_MOUSE</name>
<sequence length="512" mass="58498">MGELRFKHLFWGSFVESGGTFQTVLIFLLIPCSLTVDYRAAPILSNTTFLWIWNVPTERCVGNVNDPIDLSFFSLIGSPRKTATGQPVTLFYVDRLGLYPHIDANQAEHYGGIPQRGDYQAHLRKAKTDIEHYIPDDKLGLAIIDWEEWRPTWLRNWKPKDNYRNKSIELVQSTNPGLSITEATQKAIQQFEEAGRKFMEGTLHLGKFLRPNQLWGYYLFPDCYNNKFQDPKYDGQCPAVEKKRNDNLKWLWKASTGLYPSVYLKKDLKSNRQATLYVRYRVVEAIRVSKVGNASDPVPIFVYIRLVFTDRTSEYLLEDDLVNTIGEIVALGTSGIIIWDAMSLAQRAAGCPILHKYMQTTLNPYIVNVTLAAKMCSQTLCNEKGMCSRRKESSDVYLHLNPSHFDIMLTETGKYEVLGNPRVGDLEYFSEHFKCSCFSRMTCKETSDVKNVQDVNVCVGDNVCIKAKVEPNPAFYLLPGKSLLFMTTLGHVLYHLPQDIFVFPRKTLVSTP</sequence>
<evidence type="ECO:0000250" key="1"/>
<evidence type="ECO:0000255" key="2"/>
<evidence type="ECO:0000305" key="3"/>
<comment type="function">
    <text>Involved in sperm-egg adhesion. Upon fertilization sperm must first penetrate a layer of cumulus cells that surrounds the egg before reaching the zona pellucida. The cumulus cells are embedded in a matrix containing hyaluronic acid which is formed prior to ovulation. This protein aids in penetrating the layer of cumulus cells by digesting hyaluronic acid.</text>
</comment>
<comment type="catalytic activity">
    <reaction>
        <text>Random hydrolysis of (1-&gt;4)-linkages between N-acetyl-beta-D-glucosamine and D-glucuronate residues in hyaluronate.</text>
        <dbReference type="EC" id="3.2.1.35"/>
    </reaction>
</comment>
<comment type="subcellular location">
    <subcellularLocation>
        <location>Cell membrane</location>
        <topology>Lipid-anchor</topology>
        <topology>GPI-anchor</topology>
    </subcellularLocation>
</comment>
<comment type="similarity">
    <text evidence="3">Belongs to the glycosyl hydrolase 56 family.</text>
</comment>
<feature type="signal peptide" evidence="1">
    <location>
        <begin position="1"/>
        <end position="35"/>
    </location>
</feature>
<feature type="chain" id="PRO_0000012093" description="Hyaluronidase PH-20">
    <location>
        <begin position="36"/>
        <end status="unknown"/>
    </location>
</feature>
<feature type="propeptide" id="PRO_0000012094" description="Removed in mature form" evidence="2">
    <location>
        <begin status="unknown"/>
        <end position="512"/>
    </location>
</feature>
<feature type="active site" description="Proton donor" evidence="1">
    <location>
        <position position="147"/>
    </location>
</feature>
<feature type="glycosylation site" description="N-linked (GlcNAc...) asparagine" evidence="2">
    <location>
        <position position="46"/>
    </location>
</feature>
<feature type="glycosylation site" description="N-linked (GlcNAc...) asparagine" evidence="2">
    <location>
        <position position="165"/>
    </location>
</feature>
<feature type="glycosylation site" description="N-linked (GlcNAc...) asparagine" evidence="2">
    <location>
        <position position="293"/>
    </location>
</feature>
<feature type="glycosylation site" description="N-linked (GlcNAc...) asparagine" evidence="2">
    <location>
        <position position="368"/>
    </location>
</feature>
<feature type="disulfide bond" evidence="1">
    <location>
        <begin position="60"/>
        <end position="351"/>
    </location>
</feature>
<feature type="disulfide bond" evidence="1">
    <location>
        <begin position="223"/>
        <end position="237"/>
    </location>
</feature>
<feature type="disulfide bond" evidence="1">
    <location>
        <begin position="376"/>
        <end position="387"/>
    </location>
</feature>
<feature type="disulfide bond" evidence="1">
    <location>
        <begin position="381"/>
        <end position="435"/>
    </location>
</feature>
<feature type="disulfide bond" evidence="1">
    <location>
        <begin position="437"/>
        <end position="464"/>
    </location>
</feature>
<feature type="sequence conflict" description="In Ref. 1; AAA76603." evidence="3" ref="1">
    <original>E</original>
    <variation>R</variation>
    <location>
        <position position="182"/>
    </location>
</feature>
<feature type="sequence conflict" description="In Ref. 1; AAA76603." evidence="3" ref="1">
    <original>F</original>
    <variation>L</variation>
    <location>
        <position position="191"/>
    </location>
</feature>
<feature type="sequence conflict" description="In Ref. 2; BAC55070." evidence="3" ref="2">
    <original>N</original>
    <variation>H</variation>
    <location>
        <position position="271"/>
    </location>
</feature>
<feature type="sequence conflict" description="In Ref. 4; BAB24161." evidence="3" ref="4">
    <original>H</original>
    <variation>R</variation>
    <location>
        <position position="495"/>
    </location>
</feature>
<protein>
    <recommendedName>
        <fullName>Hyaluronidase PH-20</fullName>
        <shortName>Hyal-PH20</shortName>
        <ecNumber>3.2.1.35</ecNumber>
    </recommendedName>
    <alternativeName>
        <fullName>Hyaluronoglucosaminidase PH-20</fullName>
    </alternativeName>
    <alternativeName>
        <fullName>Sperm adhesion molecule 1</fullName>
    </alternativeName>
    <alternativeName>
        <fullName>Sperm surface protein PH-20</fullName>
    </alternativeName>
</protein>